<comment type="function">
    <text evidence="1">Catalyzes the condensation of ATP and 5-phosphoribose 1-diphosphate to form N'-(5'-phosphoribosyl)-ATP (PR-ATP). Has a crucial role in the pathway because the rate of histidine biosynthesis seems to be controlled primarily by regulation of HisG enzymatic activity.</text>
</comment>
<comment type="catalytic activity">
    <reaction evidence="1">
        <text>1-(5-phospho-beta-D-ribosyl)-ATP + diphosphate = 5-phospho-alpha-D-ribose 1-diphosphate + ATP</text>
        <dbReference type="Rhea" id="RHEA:18473"/>
        <dbReference type="ChEBI" id="CHEBI:30616"/>
        <dbReference type="ChEBI" id="CHEBI:33019"/>
        <dbReference type="ChEBI" id="CHEBI:58017"/>
        <dbReference type="ChEBI" id="CHEBI:73183"/>
        <dbReference type="EC" id="2.4.2.17"/>
    </reaction>
</comment>
<comment type="pathway">
    <text evidence="1">Amino-acid biosynthesis; L-histidine biosynthesis; L-histidine from 5-phospho-alpha-D-ribose 1-diphosphate: step 1/9.</text>
</comment>
<comment type="subunit">
    <text evidence="1">Heteromultimer composed of HisG and HisZ subunits.</text>
</comment>
<comment type="subcellular location">
    <subcellularLocation>
        <location evidence="1">Cytoplasm</location>
    </subcellularLocation>
</comment>
<comment type="domain">
    <text>Lacks the C-terminal regulatory region which is replaced by HisZ.</text>
</comment>
<comment type="similarity">
    <text evidence="1">Belongs to the ATP phosphoribosyltransferase family. Short subfamily.</text>
</comment>
<feature type="chain" id="PRO_1000084154" description="ATP phosphoribosyltransferase">
    <location>
        <begin position="1"/>
        <end position="231"/>
    </location>
</feature>
<proteinExistence type="inferred from homology"/>
<dbReference type="EC" id="2.4.2.17" evidence="1"/>
<dbReference type="EMBL" id="CP000912">
    <property type="protein sequence ID" value="ABY39211.1"/>
    <property type="molecule type" value="Genomic_DNA"/>
</dbReference>
<dbReference type="RefSeq" id="WP_002966393.1">
    <property type="nucleotide sequence ID" value="NC_010167.1"/>
</dbReference>
<dbReference type="SMR" id="A9WXP5"/>
<dbReference type="GeneID" id="93015854"/>
<dbReference type="KEGG" id="bmt:BSUIS_B0192"/>
<dbReference type="HOGENOM" id="CLU_038115_0_1_5"/>
<dbReference type="UniPathway" id="UPA00031">
    <property type="reaction ID" value="UER00006"/>
</dbReference>
<dbReference type="Proteomes" id="UP000008545">
    <property type="component" value="Chromosome II"/>
</dbReference>
<dbReference type="GO" id="GO:0005737">
    <property type="term" value="C:cytoplasm"/>
    <property type="evidence" value="ECO:0007669"/>
    <property type="project" value="UniProtKB-SubCell"/>
</dbReference>
<dbReference type="GO" id="GO:0005524">
    <property type="term" value="F:ATP binding"/>
    <property type="evidence" value="ECO:0007669"/>
    <property type="project" value="UniProtKB-KW"/>
</dbReference>
<dbReference type="GO" id="GO:0003879">
    <property type="term" value="F:ATP phosphoribosyltransferase activity"/>
    <property type="evidence" value="ECO:0007669"/>
    <property type="project" value="UniProtKB-UniRule"/>
</dbReference>
<dbReference type="GO" id="GO:0000105">
    <property type="term" value="P:L-histidine biosynthetic process"/>
    <property type="evidence" value="ECO:0007669"/>
    <property type="project" value="UniProtKB-UniRule"/>
</dbReference>
<dbReference type="CDD" id="cd13593">
    <property type="entry name" value="PBP2_HisGL3"/>
    <property type="match status" value="1"/>
</dbReference>
<dbReference type="Gene3D" id="3.40.190.10">
    <property type="entry name" value="Periplasmic binding protein-like II"/>
    <property type="match status" value="2"/>
</dbReference>
<dbReference type="HAMAP" id="MF_01018">
    <property type="entry name" value="HisG_Short"/>
    <property type="match status" value="1"/>
</dbReference>
<dbReference type="InterPro" id="IPR013820">
    <property type="entry name" value="ATP_PRibTrfase_cat"/>
</dbReference>
<dbReference type="InterPro" id="IPR018198">
    <property type="entry name" value="ATP_PRibTrfase_CS"/>
</dbReference>
<dbReference type="InterPro" id="IPR001348">
    <property type="entry name" value="ATP_PRibTrfase_HisG"/>
</dbReference>
<dbReference type="InterPro" id="IPR024893">
    <property type="entry name" value="ATP_PRibTrfase_HisG_short"/>
</dbReference>
<dbReference type="NCBIfam" id="TIGR00070">
    <property type="entry name" value="hisG"/>
    <property type="match status" value="1"/>
</dbReference>
<dbReference type="PANTHER" id="PTHR21403:SF8">
    <property type="entry name" value="ATP PHOSPHORIBOSYLTRANSFERASE"/>
    <property type="match status" value="1"/>
</dbReference>
<dbReference type="PANTHER" id="PTHR21403">
    <property type="entry name" value="ATP PHOSPHORIBOSYLTRANSFERASE ATP-PRTASE"/>
    <property type="match status" value="1"/>
</dbReference>
<dbReference type="Pfam" id="PF01634">
    <property type="entry name" value="HisG"/>
    <property type="match status" value="1"/>
</dbReference>
<dbReference type="SUPFAM" id="SSF53850">
    <property type="entry name" value="Periplasmic binding protein-like II"/>
    <property type="match status" value="1"/>
</dbReference>
<dbReference type="PROSITE" id="PS01316">
    <property type="entry name" value="ATP_P_PHORIBOSYLTR"/>
    <property type="match status" value="1"/>
</dbReference>
<evidence type="ECO:0000255" key="1">
    <source>
        <dbReference type="HAMAP-Rule" id="MF_01018"/>
    </source>
</evidence>
<protein>
    <recommendedName>
        <fullName evidence="1">ATP phosphoribosyltransferase</fullName>
        <shortName evidence="1">ATP-PRT</shortName>
        <shortName evidence="1">ATP-PRTase</shortName>
        <ecNumber evidence="1">2.4.2.17</ecNumber>
    </recommendedName>
</protein>
<accession>A9WXP5</accession>
<gene>
    <name evidence="1" type="primary">hisG</name>
    <name type="ordered locus">BSUIS_B0192</name>
</gene>
<sequence>MSVTLALPSKGRLKEKTLAVLEKAGYKVVLPDDDRNYRARVEGEDDLDILFLSASEIARELGYGSVDLGVTGEDLVRETLAHADERVAIEAQLGFGHADVVVAVPEVWRDVTTMADLDDVAADFRQRHGRRLRIATKYWRLTQQFFSQKHGIQVYRIVESLGATEGAPAAGSADMIVDITSTGSTLRANRLKVLEDGIILRSQACLVSARRSHTSRRVEEIAARIRAGLEI</sequence>
<name>HIS1_BRUSI</name>
<organism>
    <name type="scientific">Brucella suis (strain ATCC 23445 / NCTC 10510)</name>
    <dbReference type="NCBI Taxonomy" id="470137"/>
    <lineage>
        <taxon>Bacteria</taxon>
        <taxon>Pseudomonadati</taxon>
        <taxon>Pseudomonadota</taxon>
        <taxon>Alphaproteobacteria</taxon>
        <taxon>Hyphomicrobiales</taxon>
        <taxon>Brucellaceae</taxon>
        <taxon>Brucella/Ochrobactrum group</taxon>
        <taxon>Brucella</taxon>
    </lineage>
</organism>
<reference key="1">
    <citation type="submission" date="2007-12" db="EMBL/GenBank/DDBJ databases">
        <title>Brucella suis ATCC 23445 whole genome shotgun sequencing project.</title>
        <authorList>
            <person name="Setubal J.C."/>
            <person name="Bowns C."/>
            <person name="Boyle S."/>
            <person name="Crasta O.R."/>
            <person name="Czar M.J."/>
            <person name="Dharmanolla C."/>
            <person name="Gillespie J.J."/>
            <person name="Kenyon R.W."/>
            <person name="Lu J."/>
            <person name="Mane S."/>
            <person name="Mohapatra S."/>
            <person name="Nagrani S."/>
            <person name="Purkayastha A."/>
            <person name="Rajasimha H.K."/>
            <person name="Shallom J.M."/>
            <person name="Shallom S."/>
            <person name="Shukla M."/>
            <person name="Snyder E.E."/>
            <person name="Sobral B.W."/>
            <person name="Wattam A.R."/>
            <person name="Will R."/>
            <person name="Williams K."/>
            <person name="Yoo H."/>
            <person name="Bruce D."/>
            <person name="Detter C."/>
            <person name="Munk C."/>
            <person name="Brettin T.S."/>
        </authorList>
    </citation>
    <scope>NUCLEOTIDE SEQUENCE [LARGE SCALE GENOMIC DNA]</scope>
    <source>
        <strain>ATCC 23445 / NCTC 10510</strain>
    </source>
</reference>
<keyword id="KW-0028">Amino-acid biosynthesis</keyword>
<keyword id="KW-0067">ATP-binding</keyword>
<keyword id="KW-0963">Cytoplasm</keyword>
<keyword id="KW-0328">Glycosyltransferase</keyword>
<keyword id="KW-0368">Histidine biosynthesis</keyword>
<keyword id="KW-0547">Nucleotide-binding</keyword>
<keyword id="KW-0808">Transferase</keyword>